<reference key="1">
    <citation type="journal article" date="2003" name="Nucleic Acids Res.">
        <title>Genome sequence of Chlamydophila caviae (Chlamydia psittaci GPIC): examining the role of niche-specific genes in the evolution of the Chlamydiaceae.</title>
        <authorList>
            <person name="Read T.D."/>
            <person name="Myers G.S.A."/>
            <person name="Brunham R.C."/>
            <person name="Nelson W.C."/>
            <person name="Paulsen I.T."/>
            <person name="Heidelberg J.F."/>
            <person name="Holtzapple E.K."/>
            <person name="Khouri H.M."/>
            <person name="Federova N.B."/>
            <person name="Carty H.A."/>
            <person name="Umayam L.A."/>
            <person name="Haft D.H."/>
            <person name="Peterson J.D."/>
            <person name="Beanan M.J."/>
            <person name="White O."/>
            <person name="Salzberg S.L."/>
            <person name="Hsia R.-C."/>
            <person name="McClarty G."/>
            <person name="Rank R.G."/>
            <person name="Bavoil P.M."/>
            <person name="Fraser C.M."/>
        </authorList>
    </citation>
    <scope>NUCLEOTIDE SEQUENCE [LARGE SCALE GENOMIC DNA]</scope>
    <source>
        <strain>ATCC VR-813 / DSM 19441 / 03DC25 / GPIC</strain>
    </source>
</reference>
<protein>
    <recommendedName>
        <fullName evidence="1">Methionine--tRNA ligase</fullName>
        <ecNumber evidence="1">6.1.1.10</ecNumber>
    </recommendedName>
    <alternativeName>
        <fullName evidence="1">Methionyl-tRNA synthetase</fullName>
        <shortName evidence="1">MetRS</shortName>
    </alternativeName>
</protein>
<gene>
    <name evidence="1" type="primary">metG</name>
    <name type="ordered locus">CCA_00651</name>
</gene>
<name>SYM_CHLCV</name>
<feature type="chain" id="PRO_0000139119" description="Methionine--tRNA ligase">
    <location>
        <begin position="1"/>
        <end position="550"/>
    </location>
</feature>
<feature type="short sequence motif" description="'HIGH' region">
    <location>
        <begin position="12"/>
        <end position="22"/>
    </location>
</feature>
<feature type="short sequence motif" description="'KMSKS' region">
    <location>
        <begin position="330"/>
        <end position="334"/>
    </location>
</feature>
<feature type="binding site" evidence="1">
    <location>
        <position position="144"/>
    </location>
    <ligand>
        <name>Zn(2+)</name>
        <dbReference type="ChEBI" id="CHEBI:29105"/>
    </ligand>
</feature>
<feature type="binding site" evidence="1">
    <location>
        <position position="147"/>
    </location>
    <ligand>
        <name>Zn(2+)</name>
        <dbReference type="ChEBI" id="CHEBI:29105"/>
    </ligand>
</feature>
<feature type="binding site" evidence="1">
    <location>
        <position position="157"/>
    </location>
    <ligand>
        <name>Zn(2+)</name>
        <dbReference type="ChEBI" id="CHEBI:29105"/>
    </ligand>
</feature>
<feature type="binding site" evidence="1">
    <location>
        <position position="160"/>
    </location>
    <ligand>
        <name>Zn(2+)</name>
        <dbReference type="ChEBI" id="CHEBI:29105"/>
    </ligand>
</feature>
<feature type="binding site" evidence="1">
    <location>
        <position position="333"/>
    </location>
    <ligand>
        <name>ATP</name>
        <dbReference type="ChEBI" id="CHEBI:30616"/>
    </ligand>
</feature>
<sequence>MPSRVLITSALPYANGPLHFGHIAGAYLPADVYARFRRLLGDDVLYICGSDEYGIAITLNAERVGLGYQEYVSMYHKVHKDTFDKLGISLDFFSRTTNPFHKAIVEDFYLELKSKGLVENQISFQLYSEDEKRFLADRYVEGTCPKCGFDGARGDECQKCGADYEATDLINPRSKLSGSQLVLKETEHAYFHLERMVEPLLAFIEKAYLPEHIRKFVVDYIKNLRPRAITRDLSWGIPVPDFPNKVFYVWFDAPIGYISATMDWAASVNTPDLWKDFWLEESTEYVQFIGKDNIPFHAAIFPAMELGQSIPYKKMNALISSEFYLLEGAQFSKSEGNFVDMDAFLDTYSLDKLRYVLAATAPETSDSEFTFLDFKTRCNSELVGKFGNFINRVLAFAEKNGFRELTCPEALEDKDRQFLDDCQRIVQEAQAYYSKYSLRKACSAIMELAALGNVYFNDQAPWKLLKEGFAHRVEAILFCACYCQKLLALIAYPILPGTAWEIWNMLAPKSLDLENQDKDRVKNLWNTEFIDFSDEVFSLTTPQLLFTIVD</sequence>
<proteinExistence type="inferred from homology"/>
<dbReference type="EC" id="6.1.1.10" evidence="1"/>
<dbReference type="EMBL" id="AE015925">
    <property type="protein sequence ID" value="AAP05393.1"/>
    <property type="molecule type" value="Genomic_DNA"/>
</dbReference>
<dbReference type="RefSeq" id="WP_011006608.1">
    <property type="nucleotide sequence ID" value="NC_003361.3"/>
</dbReference>
<dbReference type="SMR" id="Q822N0"/>
<dbReference type="STRING" id="227941.CCA_00651"/>
<dbReference type="KEGG" id="cca:CCA_00651"/>
<dbReference type="eggNOG" id="COG0143">
    <property type="taxonomic scope" value="Bacteria"/>
</dbReference>
<dbReference type="HOGENOM" id="CLU_009710_1_2_0"/>
<dbReference type="OrthoDB" id="9810191at2"/>
<dbReference type="Proteomes" id="UP000002193">
    <property type="component" value="Chromosome"/>
</dbReference>
<dbReference type="GO" id="GO:0005829">
    <property type="term" value="C:cytosol"/>
    <property type="evidence" value="ECO:0007669"/>
    <property type="project" value="TreeGrafter"/>
</dbReference>
<dbReference type="GO" id="GO:0005524">
    <property type="term" value="F:ATP binding"/>
    <property type="evidence" value="ECO:0007669"/>
    <property type="project" value="UniProtKB-UniRule"/>
</dbReference>
<dbReference type="GO" id="GO:0046872">
    <property type="term" value="F:metal ion binding"/>
    <property type="evidence" value="ECO:0007669"/>
    <property type="project" value="UniProtKB-KW"/>
</dbReference>
<dbReference type="GO" id="GO:0004825">
    <property type="term" value="F:methionine-tRNA ligase activity"/>
    <property type="evidence" value="ECO:0007669"/>
    <property type="project" value="UniProtKB-UniRule"/>
</dbReference>
<dbReference type="GO" id="GO:0006431">
    <property type="term" value="P:methionyl-tRNA aminoacylation"/>
    <property type="evidence" value="ECO:0007669"/>
    <property type="project" value="UniProtKB-UniRule"/>
</dbReference>
<dbReference type="CDD" id="cd07957">
    <property type="entry name" value="Anticodon_Ia_Met"/>
    <property type="match status" value="1"/>
</dbReference>
<dbReference type="CDD" id="cd00814">
    <property type="entry name" value="MetRS_core"/>
    <property type="match status" value="1"/>
</dbReference>
<dbReference type="FunFam" id="2.20.28.20:FF:000001">
    <property type="entry name" value="Methionine--tRNA ligase"/>
    <property type="match status" value="1"/>
</dbReference>
<dbReference type="Gene3D" id="3.40.50.620">
    <property type="entry name" value="HUPs"/>
    <property type="match status" value="1"/>
</dbReference>
<dbReference type="Gene3D" id="1.10.730.10">
    <property type="entry name" value="Isoleucyl-tRNA Synthetase, Domain 1"/>
    <property type="match status" value="1"/>
</dbReference>
<dbReference type="Gene3D" id="2.20.28.20">
    <property type="entry name" value="Methionyl-tRNA synthetase, Zn-domain"/>
    <property type="match status" value="1"/>
</dbReference>
<dbReference type="HAMAP" id="MF_00098">
    <property type="entry name" value="Met_tRNA_synth_type1"/>
    <property type="match status" value="1"/>
</dbReference>
<dbReference type="InterPro" id="IPR041872">
    <property type="entry name" value="Anticodon_Met"/>
</dbReference>
<dbReference type="InterPro" id="IPR023458">
    <property type="entry name" value="Met-tRNA_ligase_1"/>
</dbReference>
<dbReference type="InterPro" id="IPR014758">
    <property type="entry name" value="Met-tRNA_synth"/>
</dbReference>
<dbReference type="InterPro" id="IPR015413">
    <property type="entry name" value="Methionyl/Leucyl_tRNA_Synth"/>
</dbReference>
<dbReference type="InterPro" id="IPR033911">
    <property type="entry name" value="MetRS_core"/>
</dbReference>
<dbReference type="InterPro" id="IPR029038">
    <property type="entry name" value="MetRS_Zn"/>
</dbReference>
<dbReference type="InterPro" id="IPR014729">
    <property type="entry name" value="Rossmann-like_a/b/a_fold"/>
</dbReference>
<dbReference type="InterPro" id="IPR009080">
    <property type="entry name" value="tRNAsynth_Ia_anticodon-bd"/>
</dbReference>
<dbReference type="NCBIfam" id="TIGR00398">
    <property type="entry name" value="metG"/>
    <property type="match status" value="1"/>
</dbReference>
<dbReference type="PANTHER" id="PTHR45765">
    <property type="entry name" value="METHIONINE--TRNA LIGASE"/>
    <property type="match status" value="1"/>
</dbReference>
<dbReference type="PANTHER" id="PTHR45765:SF1">
    <property type="entry name" value="METHIONINE--TRNA LIGASE, CYTOPLASMIC"/>
    <property type="match status" value="1"/>
</dbReference>
<dbReference type="Pfam" id="PF19303">
    <property type="entry name" value="Anticodon_3"/>
    <property type="match status" value="1"/>
</dbReference>
<dbReference type="Pfam" id="PF09334">
    <property type="entry name" value="tRNA-synt_1g"/>
    <property type="match status" value="1"/>
</dbReference>
<dbReference type="PRINTS" id="PR01041">
    <property type="entry name" value="TRNASYNTHMET"/>
</dbReference>
<dbReference type="SUPFAM" id="SSF47323">
    <property type="entry name" value="Anticodon-binding domain of a subclass of class I aminoacyl-tRNA synthetases"/>
    <property type="match status" value="1"/>
</dbReference>
<dbReference type="SUPFAM" id="SSF57770">
    <property type="entry name" value="Methionyl-tRNA synthetase (MetRS), Zn-domain"/>
    <property type="match status" value="1"/>
</dbReference>
<dbReference type="SUPFAM" id="SSF52374">
    <property type="entry name" value="Nucleotidylyl transferase"/>
    <property type="match status" value="1"/>
</dbReference>
<comment type="function">
    <text evidence="1">Is required not only for elongation of protein synthesis but also for the initiation of all mRNA translation through initiator tRNA(fMet) aminoacylation.</text>
</comment>
<comment type="catalytic activity">
    <reaction evidence="1">
        <text>tRNA(Met) + L-methionine + ATP = L-methionyl-tRNA(Met) + AMP + diphosphate</text>
        <dbReference type="Rhea" id="RHEA:13481"/>
        <dbReference type="Rhea" id="RHEA-COMP:9667"/>
        <dbReference type="Rhea" id="RHEA-COMP:9698"/>
        <dbReference type="ChEBI" id="CHEBI:30616"/>
        <dbReference type="ChEBI" id="CHEBI:33019"/>
        <dbReference type="ChEBI" id="CHEBI:57844"/>
        <dbReference type="ChEBI" id="CHEBI:78442"/>
        <dbReference type="ChEBI" id="CHEBI:78530"/>
        <dbReference type="ChEBI" id="CHEBI:456215"/>
        <dbReference type="EC" id="6.1.1.10"/>
    </reaction>
</comment>
<comment type="cofactor">
    <cofactor evidence="1">
        <name>Zn(2+)</name>
        <dbReference type="ChEBI" id="CHEBI:29105"/>
    </cofactor>
    <text evidence="1">Binds 1 zinc ion per subunit.</text>
</comment>
<comment type="subunit">
    <text evidence="1">Monomer.</text>
</comment>
<comment type="subcellular location">
    <subcellularLocation>
        <location evidence="1">Cytoplasm</location>
    </subcellularLocation>
</comment>
<comment type="similarity">
    <text evidence="1">Belongs to the class-I aminoacyl-tRNA synthetase family. MetG type 1 subfamily.</text>
</comment>
<evidence type="ECO:0000255" key="1">
    <source>
        <dbReference type="HAMAP-Rule" id="MF_00098"/>
    </source>
</evidence>
<keyword id="KW-0030">Aminoacyl-tRNA synthetase</keyword>
<keyword id="KW-0067">ATP-binding</keyword>
<keyword id="KW-0963">Cytoplasm</keyword>
<keyword id="KW-0436">Ligase</keyword>
<keyword id="KW-0479">Metal-binding</keyword>
<keyword id="KW-0547">Nucleotide-binding</keyword>
<keyword id="KW-0648">Protein biosynthesis</keyword>
<keyword id="KW-0862">Zinc</keyword>
<accession>Q822N0</accession>
<organism>
    <name type="scientific">Chlamydia caviae (strain ATCC VR-813 / DSM 19441 / 03DC25 / GPIC)</name>
    <name type="common">Chlamydophila caviae</name>
    <dbReference type="NCBI Taxonomy" id="227941"/>
    <lineage>
        <taxon>Bacteria</taxon>
        <taxon>Pseudomonadati</taxon>
        <taxon>Chlamydiota</taxon>
        <taxon>Chlamydiia</taxon>
        <taxon>Chlamydiales</taxon>
        <taxon>Chlamydiaceae</taxon>
        <taxon>Chlamydia/Chlamydophila group</taxon>
        <taxon>Chlamydia</taxon>
    </lineage>
</organism>